<evidence type="ECO:0000250" key="1"/>
<evidence type="ECO:0000255" key="2">
    <source>
        <dbReference type="HAMAP-Rule" id="MF_04076"/>
    </source>
</evidence>
<evidence type="ECO:0000256" key="3">
    <source>
        <dbReference type="SAM" id="MobiDB-lite"/>
    </source>
</evidence>
<feature type="signal peptide" evidence="2">
    <location>
        <begin position="1"/>
        <end position="19"/>
    </location>
</feature>
<feature type="chain" id="PRO_0000324727" description="External core antigen" evidence="2">
    <location>
        <begin position="20"/>
        <end position="212"/>
    </location>
</feature>
<feature type="propeptide" id="PRO_0000324728" evidence="1">
    <location>
        <begin position="184"/>
        <end position="212"/>
    </location>
</feature>
<feature type="repeat" description="1; half-length">
    <location>
        <begin position="184"/>
        <end position="190"/>
    </location>
</feature>
<feature type="repeat" description="2">
    <location>
        <begin position="191"/>
        <end position="198"/>
    </location>
</feature>
<feature type="repeat" description="3">
    <location>
        <begin position="199"/>
        <end position="206"/>
    </location>
</feature>
<feature type="region of interest" description="HBEAG" evidence="2">
    <location>
        <begin position="25"/>
        <end position="27"/>
    </location>
</feature>
<feature type="region of interest" description="Disordered" evidence="3">
    <location>
        <begin position="179"/>
        <end position="212"/>
    </location>
</feature>
<feature type="region of interest" description="3 X 8 AA repeats of S-P-R-R-R-R-S-Q">
    <location>
        <begin position="184"/>
        <end position="206"/>
    </location>
</feature>
<feature type="compositionally biased region" description="Basic residues" evidence="3">
    <location>
        <begin position="180"/>
        <end position="205"/>
    </location>
</feature>
<feature type="disulfide bond" description="Interchain" evidence="2">
    <location>
        <position position="77"/>
    </location>
</feature>
<feature type="disulfide bond" description="Interchain" evidence="2">
    <location>
        <position position="90"/>
    </location>
</feature>
<gene>
    <name evidence="2" type="primary">C</name>
</gene>
<reference key="1">
    <citation type="journal article" date="2001" name="J. Gen. Virol.">
        <title>A novel variant genotype C of hepatitis B virus identified in isolates from Australian Aborigines: complete genome sequence and phylogenetic relatedness.</title>
        <authorList>
            <person name="Sugauchi F."/>
            <person name="Mizokami M."/>
            <person name="Orito E."/>
            <person name="Ohno T."/>
            <person name="Kato H."/>
            <person name="Suzuki S."/>
            <person name="Kimura Y."/>
            <person name="Ueda R."/>
            <person name="Butterworth L.A."/>
            <person name="Cooksley W.G."/>
        </authorList>
    </citation>
    <scope>NUCLEOTIDE SEQUENCE [GENOMIC DNA]</scope>
</reference>
<organism>
    <name type="scientific">Hepatitis B virus genotype D subtype ayw (isolate Australia/AustKW/1991)</name>
    <name type="common">HBV-D</name>
    <dbReference type="NCBI Taxonomy" id="489488"/>
    <lineage>
        <taxon>Viruses</taxon>
        <taxon>Riboviria</taxon>
        <taxon>Pararnavirae</taxon>
        <taxon>Artverviricota</taxon>
        <taxon>Revtraviricetes</taxon>
        <taxon>Blubervirales</taxon>
        <taxon>Hepadnaviridae</taxon>
        <taxon>Orthohepadnavirus</taxon>
        <taxon>Hepatitis B virus</taxon>
        <taxon>hepatitis B virus genotype D</taxon>
    </lineage>
</organism>
<organismHost>
    <name type="scientific">Homo sapiens</name>
    <name type="common">Human</name>
    <dbReference type="NCBI Taxonomy" id="9606"/>
</organismHost>
<organismHost>
    <name type="scientific">Pan troglodytes</name>
    <name type="common">Chimpanzee</name>
    <dbReference type="NCBI Taxonomy" id="9598"/>
</organismHost>
<comment type="function">
    <text evidence="2">May regulate immune response to the intracellular capsid in acting as a T-cell tolerogen, by having an immunoregulatory effect which prevents destruction of infected cells by cytotoxic T-cells. This immune regulation may predispose to chronicity during perinatal infections and prevent severe liver injury during adult infections.</text>
</comment>
<comment type="subunit">
    <text evidence="2">Homodimerizes.</text>
</comment>
<comment type="subcellular location">
    <subcellularLocation>
        <location evidence="2">Secreted</location>
    </subcellularLocation>
    <subcellularLocation>
        <location evidence="2">Host nucleus</location>
    </subcellularLocation>
</comment>
<comment type="alternative products">
    <event type="alternative initiation"/>
    <isoform>
        <id>P0C6I1-1</id>
        <name>External core antigen</name>
        <sequence type="displayed"/>
    </isoform>
    <isoform>
        <id>P0C680-1</id>
        <name>Capsid protein</name>
        <sequence type="external"/>
    </isoform>
</comment>
<comment type="PTM">
    <text evidence="2">Phosphorylated.</text>
</comment>
<comment type="PTM">
    <text evidence="2">Cleaved by host furin.</text>
</comment>
<comment type="similarity">
    <text evidence="2">Belongs to the orthohepadnavirus precore antigen family.</text>
</comment>
<protein>
    <recommendedName>
        <fullName evidence="2">External core antigen</fullName>
    </recommendedName>
    <alternativeName>
        <fullName evidence="2">HBeAg</fullName>
    </alternativeName>
    <alternativeName>
        <fullName evidence="2">Precore protein</fullName>
    </alternativeName>
    <alternativeName>
        <fullName evidence="2">p25</fullName>
    </alternativeName>
</protein>
<dbReference type="EMBL" id="AB048701">
    <property type="status" value="NOT_ANNOTATED_CDS"/>
    <property type="molecule type" value="Genomic_DNA"/>
</dbReference>
<dbReference type="SMR" id="P0C6I1"/>
<dbReference type="IntAct" id="P0C6I1">
    <property type="interactions" value="2"/>
</dbReference>
<dbReference type="Proteomes" id="UP000007932">
    <property type="component" value="Genome"/>
</dbReference>
<dbReference type="GO" id="GO:0005576">
    <property type="term" value="C:extracellular region"/>
    <property type="evidence" value="ECO:0007669"/>
    <property type="project" value="UniProtKB-SubCell"/>
</dbReference>
<dbReference type="GO" id="GO:0043657">
    <property type="term" value="C:host cell"/>
    <property type="evidence" value="ECO:0007669"/>
    <property type="project" value="GOC"/>
</dbReference>
<dbReference type="GO" id="GO:0030430">
    <property type="term" value="C:host cell cytoplasm"/>
    <property type="evidence" value="ECO:0007669"/>
    <property type="project" value="UniProtKB-UniRule"/>
</dbReference>
<dbReference type="GO" id="GO:0042025">
    <property type="term" value="C:host cell nucleus"/>
    <property type="evidence" value="ECO:0007669"/>
    <property type="project" value="UniProtKB-SubCell"/>
</dbReference>
<dbReference type="GO" id="GO:0039619">
    <property type="term" value="C:T=4 icosahedral viral capsid"/>
    <property type="evidence" value="ECO:0007669"/>
    <property type="project" value="UniProtKB-UniRule"/>
</dbReference>
<dbReference type="GO" id="GO:0003677">
    <property type="term" value="F:DNA binding"/>
    <property type="evidence" value="ECO:0007669"/>
    <property type="project" value="UniProtKB-UniRule"/>
</dbReference>
<dbReference type="GO" id="GO:0003723">
    <property type="term" value="F:RNA binding"/>
    <property type="evidence" value="ECO:0007669"/>
    <property type="project" value="UniProtKB-UniRule"/>
</dbReference>
<dbReference type="GO" id="GO:0005198">
    <property type="term" value="F:structural molecule activity"/>
    <property type="evidence" value="ECO:0007669"/>
    <property type="project" value="UniProtKB-UniRule"/>
</dbReference>
<dbReference type="GO" id="GO:0075521">
    <property type="term" value="P:microtubule-dependent intracellular transport of viral material towards nucleus"/>
    <property type="evidence" value="ECO:0007669"/>
    <property type="project" value="UniProtKB-UniRule"/>
</dbReference>
<dbReference type="GO" id="GO:0046718">
    <property type="term" value="P:symbiont entry into host cell"/>
    <property type="evidence" value="ECO:0007669"/>
    <property type="project" value="UniProtKB-UniRule"/>
</dbReference>
<dbReference type="GO" id="GO:0075732">
    <property type="term" value="P:viral penetration into host nucleus"/>
    <property type="evidence" value="ECO:0007669"/>
    <property type="project" value="UniProtKB-UniRule"/>
</dbReference>
<dbReference type="FunFam" id="1.10.4090.10:FF:000001">
    <property type="entry name" value="Capsid protein"/>
    <property type="match status" value="1"/>
</dbReference>
<dbReference type="Gene3D" id="1.10.4090.10">
    <property type="entry name" value="Viral capsid, core domain supefamily, Hepatitis B virus"/>
    <property type="match status" value="1"/>
</dbReference>
<dbReference type="HAMAP" id="MF_04076">
    <property type="entry name" value="HBV_HBEAG"/>
    <property type="match status" value="1"/>
</dbReference>
<dbReference type="InterPro" id="IPR013195">
    <property type="entry name" value="Hepatitis_B_virus_capsid_N"/>
</dbReference>
<dbReference type="InterPro" id="IPR002006">
    <property type="entry name" value="Hepatitis_core"/>
</dbReference>
<dbReference type="InterPro" id="IPR036459">
    <property type="entry name" value="Viral_capsid_core_dom_sf_HBV"/>
</dbReference>
<dbReference type="Pfam" id="PF08290">
    <property type="entry name" value="Hep_core_N"/>
    <property type="match status" value="1"/>
</dbReference>
<dbReference type="Pfam" id="PF00906">
    <property type="entry name" value="Hepatitis_core"/>
    <property type="match status" value="3"/>
</dbReference>
<dbReference type="SUPFAM" id="SSF47852">
    <property type="entry name" value="Hepatitis B viral capsid (hbcag)"/>
    <property type="match status" value="1"/>
</dbReference>
<keyword id="KW-0024">Alternative initiation</keyword>
<keyword id="KW-1015">Disulfide bond</keyword>
<keyword id="KW-1048">Host nucleus</keyword>
<keyword id="KW-0945">Host-virus interaction</keyword>
<keyword id="KW-0677">Repeat</keyword>
<keyword id="KW-0964">Secreted</keyword>
<keyword id="KW-0732">Signal</keyword>
<keyword id="KW-0899">Viral immunoevasion</keyword>
<name>HBEAG_HBVD5</name>
<sequence>MQLFHLCLIISCSCPTVQASKLCLGWLWDMDIDPYKEFGASVELLSFLPSDFFPSVRDLLDTATALYRDALESPEHCTPHHTALRHVCLCWGDLMNLATWVGTNLEDQASRDLVVSYVNTNMGLKFRQLLWFHISCLTFGRDLVLEYLVSFGVWIRTPPAYRPSNAPILSTLPETTVVRQRGRTIRRRTPSPRRRRSQSPRRRRSQSRESQC</sequence>
<accession>P0C6I1</accession>
<proteinExistence type="inferred from homology"/>